<proteinExistence type="inferred from homology"/>
<reference key="1">
    <citation type="journal article" date="2009" name="J. Bacteriol.">
        <title>Complete genome sequence and comparative genome analysis of enteropathogenic Escherichia coli O127:H6 strain E2348/69.</title>
        <authorList>
            <person name="Iguchi A."/>
            <person name="Thomson N.R."/>
            <person name="Ogura Y."/>
            <person name="Saunders D."/>
            <person name="Ooka T."/>
            <person name="Henderson I.R."/>
            <person name="Harris D."/>
            <person name="Asadulghani M."/>
            <person name="Kurokawa K."/>
            <person name="Dean P."/>
            <person name="Kenny B."/>
            <person name="Quail M.A."/>
            <person name="Thurston S."/>
            <person name="Dougan G."/>
            <person name="Hayashi T."/>
            <person name="Parkhill J."/>
            <person name="Frankel G."/>
        </authorList>
    </citation>
    <scope>NUCLEOTIDE SEQUENCE [LARGE SCALE GENOMIC DNA]</scope>
    <source>
        <strain>E2348/69 / EPEC</strain>
    </source>
</reference>
<dbReference type="EMBL" id="FM180568">
    <property type="protein sequence ID" value="CAS10456.1"/>
    <property type="molecule type" value="Genomic_DNA"/>
</dbReference>
<dbReference type="RefSeq" id="WP_000162574.1">
    <property type="nucleotide sequence ID" value="NC_011601.1"/>
</dbReference>
<dbReference type="SMR" id="B7UH68"/>
<dbReference type="GeneID" id="93774470"/>
<dbReference type="KEGG" id="ecg:E2348C_2908"/>
<dbReference type="HOGENOM" id="CLU_108953_3_0_6"/>
<dbReference type="Proteomes" id="UP000008205">
    <property type="component" value="Chromosome"/>
</dbReference>
<dbReference type="GO" id="GO:0005829">
    <property type="term" value="C:cytosol"/>
    <property type="evidence" value="ECO:0007669"/>
    <property type="project" value="TreeGrafter"/>
</dbReference>
<dbReference type="GO" id="GO:0003723">
    <property type="term" value="F:RNA binding"/>
    <property type="evidence" value="ECO:0007669"/>
    <property type="project" value="UniProtKB-UniRule"/>
</dbReference>
<dbReference type="GO" id="GO:0070929">
    <property type="term" value="P:trans-translation"/>
    <property type="evidence" value="ECO:0007669"/>
    <property type="project" value="UniProtKB-UniRule"/>
</dbReference>
<dbReference type="CDD" id="cd09294">
    <property type="entry name" value="SmpB"/>
    <property type="match status" value="1"/>
</dbReference>
<dbReference type="FunFam" id="2.40.280.10:FF:000001">
    <property type="entry name" value="SsrA-binding protein"/>
    <property type="match status" value="1"/>
</dbReference>
<dbReference type="Gene3D" id="2.40.280.10">
    <property type="match status" value="1"/>
</dbReference>
<dbReference type="HAMAP" id="MF_00023">
    <property type="entry name" value="SmpB"/>
    <property type="match status" value="1"/>
</dbReference>
<dbReference type="InterPro" id="IPR023620">
    <property type="entry name" value="SmpB"/>
</dbReference>
<dbReference type="InterPro" id="IPR000037">
    <property type="entry name" value="SsrA-bd_prot"/>
</dbReference>
<dbReference type="InterPro" id="IPR020081">
    <property type="entry name" value="SsrA-bd_prot_CS"/>
</dbReference>
<dbReference type="NCBIfam" id="NF003843">
    <property type="entry name" value="PRK05422.1"/>
    <property type="match status" value="1"/>
</dbReference>
<dbReference type="NCBIfam" id="TIGR00086">
    <property type="entry name" value="smpB"/>
    <property type="match status" value="1"/>
</dbReference>
<dbReference type="PANTHER" id="PTHR30308:SF2">
    <property type="entry name" value="SSRA-BINDING PROTEIN"/>
    <property type="match status" value="1"/>
</dbReference>
<dbReference type="PANTHER" id="PTHR30308">
    <property type="entry name" value="TMRNA-BINDING COMPONENT OF TRANS-TRANSLATION TAGGING COMPLEX"/>
    <property type="match status" value="1"/>
</dbReference>
<dbReference type="Pfam" id="PF01668">
    <property type="entry name" value="SmpB"/>
    <property type="match status" value="1"/>
</dbReference>
<dbReference type="SUPFAM" id="SSF74982">
    <property type="entry name" value="Small protein B (SmpB)"/>
    <property type="match status" value="1"/>
</dbReference>
<dbReference type="PROSITE" id="PS01317">
    <property type="entry name" value="SSRP"/>
    <property type="match status" value="1"/>
</dbReference>
<comment type="function">
    <text evidence="1">Required for rescue of stalled ribosomes mediated by trans-translation. Binds to transfer-messenger RNA (tmRNA), required for stable association of tmRNA with ribosomes. tmRNA and SmpB together mimic tRNA shape, replacing the anticodon stem-loop with SmpB. tmRNA is encoded by the ssrA gene; the 2 termini fold to resemble tRNA(Ala) and it encodes a 'tag peptide', a short internal open reading frame. During trans-translation Ala-aminoacylated tmRNA acts like a tRNA, entering the A-site of stalled ribosomes, displacing the stalled mRNA. The ribosome then switches to translate the ORF on the tmRNA; the nascent peptide is terminated with the 'tag peptide' encoded by the tmRNA and targeted for degradation. The ribosome is freed to recommence translation, which seems to be the essential function of trans-translation.</text>
</comment>
<comment type="subcellular location">
    <subcellularLocation>
        <location evidence="1">Cytoplasm</location>
    </subcellularLocation>
    <text evidence="1">The tmRNA-SmpB complex associates with stalled 70S ribosomes.</text>
</comment>
<comment type="similarity">
    <text evidence="1">Belongs to the SmpB family.</text>
</comment>
<name>SSRP_ECO27</name>
<organism>
    <name type="scientific">Escherichia coli O127:H6 (strain E2348/69 / EPEC)</name>
    <dbReference type="NCBI Taxonomy" id="574521"/>
    <lineage>
        <taxon>Bacteria</taxon>
        <taxon>Pseudomonadati</taxon>
        <taxon>Pseudomonadota</taxon>
        <taxon>Gammaproteobacteria</taxon>
        <taxon>Enterobacterales</taxon>
        <taxon>Enterobacteriaceae</taxon>
        <taxon>Escherichia</taxon>
    </lineage>
</organism>
<sequence length="160" mass="18269">MTKKKAHKPGSATIALNKRARHEYFIEEEFEAGLALQGWEVKSLRAGKANISDSYVLLRDGEAFLFGANITPMAVASTHVVCDPTRTRKLLLNQRELDSLYGRVNREGYTVVALSLYWKNAWCKVKIGVAKGKKQHDKRSDIKEREWQVDKARIMKNAHR</sequence>
<protein>
    <recommendedName>
        <fullName evidence="1">SsrA-binding protein</fullName>
    </recommendedName>
    <alternativeName>
        <fullName evidence="1">Small protein B</fullName>
    </alternativeName>
</protein>
<gene>
    <name evidence="1" type="primary">smpB</name>
    <name type="ordered locus">E2348C_2908</name>
</gene>
<accession>B7UH68</accession>
<feature type="chain" id="PRO_1000116862" description="SsrA-binding protein">
    <location>
        <begin position="1"/>
        <end position="160"/>
    </location>
</feature>
<keyword id="KW-0963">Cytoplasm</keyword>
<keyword id="KW-1185">Reference proteome</keyword>
<keyword id="KW-0694">RNA-binding</keyword>
<evidence type="ECO:0000255" key="1">
    <source>
        <dbReference type="HAMAP-Rule" id="MF_00023"/>
    </source>
</evidence>